<keyword id="KW-0325">Glycoprotein</keyword>
<keyword id="KW-0472">Membrane</keyword>
<keyword id="KW-1185">Reference proteome</keyword>
<keyword id="KW-0732">Signal</keyword>
<keyword id="KW-0812">Transmembrane</keyword>
<keyword id="KW-1133">Transmembrane helix</keyword>
<accession>A1L3I3</accession>
<gene>
    <name type="primary">fam171a2</name>
</gene>
<organism>
    <name type="scientific">Xenopus laevis</name>
    <name type="common">African clawed frog</name>
    <dbReference type="NCBI Taxonomy" id="8355"/>
    <lineage>
        <taxon>Eukaryota</taxon>
        <taxon>Metazoa</taxon>
        <taxon>Chordata</taxon>
        <taxon>Craniata</taxon>
        <taxon>Vertebrata</taxon>
        <taxon>Euteleostomi</taxon>
        <taxon>Amphibia</taxon>
        <taxon>Batrachia</taxon>
        <taxon>Anura</taxon>
        <taxon>Pipoidea</taxon>
        <taxon>Pipidae</taxon>
        <taxon>Xenopodinae</taxon>
        <taxon>Xenopus</taxon>
        <taxon>Xenopus</taxon>
    </lineage>
</organism>
<sequence length="821" mass="89153">MGRARDSGKRSGGPPCSFLLLLLLSCGGGRGKSLLGAAGAQDFHIKVQVYENGDLSPLASAAVEIFGNQSSLASGVTDQDGVAVLGISYRLGTWVLVSATKRGFVTNSVPWRVDRLPLYASVSLYLVPERPATLILYEDIVQILLGSPGARSQPWVQFQRKAARLPRSSTYNQLTSSLTTASTRHQMRGFPAFIGTEPESANGGNTSWVELLPVAAISVHLFSGNGSEVHLSGPVQLSLPLPPESGLTTSSSVPAWRYEPKVGVWIRSGMGLVRRDGQQLYWSFVSPKLGYWAAAIPSSGRGMLSLMSGVDIAGYHTIFLLSILGALTLLVLILLCLLIYYCRRRCLKPRQQHHKLQLSGLSEPKRDQATSTSRLNLISTSHLDSTSTADSDLRTPVLRSAFSSREDFCKSGGRSSFQHSADTLPLRPGSRDEYPLKSARSGDLLESEDSKRGYGTGGKGQQRRRGGRGGVRDPPPSPPPLPPPFKHVIGDSKPPDYLMTQSADPLSRPTSLTQPGQFIFCGSIDHMKEGSYRHAMPTLVIPAHYMRLSSEENQGGQGEEQSESESGSTQVSHAHHFAPQDHAQRQQLLQQGHGYQQGATASSQDQEGKGWGNHGSVTIPVVFNESTMAQLNGELQALTEKKLLELGVKPHPRAWFVSLDGRSNAQVRHSYIDLQAGDKTRSNDASLDSGVDVNEIKVKLGPEERSGKAQLQPSNLTYSKLVFAEEGEQSLSESRTGGGCSPEDSSLTPLLDEGSETCLPMSRRGRSRGDSSRSSTSELRRDSMTSPDEDLNDQSEGGDDQDKKSPWQKREERPLMVFNVK</sequence>
<dbReference type="EMBL" id="BC130114">
    <property type="protein sequence ID" value="AAI30115.1"/>
    <property type="molecule type" value="mRNA"/>
</dbReference>
<dbReference type="RefSeq" id="NP_001091228.1">
    <property type="nucleotide sequence ID" value="NM_001097759.1"/>
</dbReference>
<dbReference type="GlyCosmos" id="A1L3I3">
    <property type="glycosylation" value="3 sites, No reported glycans"/>
</dbReference>
<dbReference type="DNASU" id="100037014"/>
<dbReference type="GeneID" id="100037014"/>
<dbReference type="KEGG" id="xla:100037014"/>
<dbReference type="AGR" id="Xenbase:XB-GENE-17339452"/>
<dbReference type="CTD" id="100037014"/>
<dbReference type="OMA" id="HLICAGP"/>
<dbReference type="OrthoDB" id="8762914at2759"/>
<dbReference type="Proteomes" id="UP000186698">
    <property type="component" value="Chromosome 9_10S"/>
</dbReference>
<dbReference type="Bgee" id="100037014">
    <property type="expression patterns" value="Expressed in brain and 19 other cell types or tissues"/>
</dbReference>
<dbReference type="GO" id="GO:0016020">
    <property type="term" value="C:membrane"/>
    <property type="evidence" value="ECO:0007669"/>
    <property type="project" value="UniProtKB-SubCell"/>
</dbReference>
<dbReference type="InterPro" id="IPR018890">
    <property type="entry name" value="FAM171"/>
</dbReference>
<dbReference type="InterPro" id="IPR049175">
    <property type="entry name" value="FAM171_C"/>
</dbReference>
<dbReference type="InterPro" id="IPR048530">
    <property type="entry name" value="FAM171_N"/>
</dbReference>
<dbReference type="PANTHER" id="PTHR31626:SF3">
    <property type="entry name" value="PROTEIN FAM171A2"/>
    <property type="match status" value="1"/>
</dbReference>
<dbReference type="PANTHER" id="PTHR31626">
    <property type="entry name" value="SUSHI DOMAIN-CONTAINING PROTEIN"/>
    <property type="match status" value="1"/>
</dbReference>
<dbReference type="Pfam" id="PF20771">
    <property type="entry name" value="FAM171A1-2-B_C"/>
    <property type="match status" value="1"/>
</dbReference>
<dbReference type="Pfam" id="PF10577">
    <property type="entry name" value="FAM171A1-2-B_N"/>
    <property type="match status" value="1"/>
</dbReference>
<feature type="signal peptide" evidence="1">
    <location>
        <begin position="1"/>
        <end position="31"/>
    </location>
</feature>
<feature type="chain" id="PRO_0000328773" description="Protein FAM171A2">
    <location>
        <begin position="32"/>
        <end position="821"/>
    </location>
</feature>
<feature type="topological domain" description="Extracellular" evidence="1">
    <location>
        <begin position="32"/>
        <end position="317"/>
    </location>
</feature>
<feature type="transmembrane region" description="Helical" evidence="1">
    <location>
        <begin position="318"/>
        <end position="338"/>
    </location>
</feature>
<feature type="topological domain" description="Cytoplasmic" evidence="1">
    <location>
        <begin position="339"/>
        <end position="821"/>
    </location>
</feature>
<feature type="region of interest" description="Disordered" evidence="2">
    <location>
        <begin position="411"/>
        <end position="512"/>
    </location>
</feature>
<feature type="region of interest" description="Disordered" evidence="2">
    <location>
        <begin position="550"/>
        <end position="613"/>
    </location>
</feature>
<feature type="region of interest" description="Disordered" evidence="2">
    <location>
        <begin position="727"/>
        <end position="821"/>
    </location>
</feature>
<feature type="compositionally biased region" description="Pro residues" evidence="2">
    <location>
        <begin position="473"/>
        <end position="485"/>
    </location>
</feature>
<feature type="compositionally biased region" description="Polar residues" evidence="2">
    <location>
        <begin position="499"/>
        <end position="512"/>
    </location>
</feature>
<feature type="compositionally biased region" description="Low complexity" evidence="2">
    <location>
        <begin position="585"/>
        <end position="599"/>
    </location>
</feature>
<feature type="compositionally biased region" description="Acidic residues" evidence="2">
    <location>
        <begin position="787"/>
        <end position="799"/>
    </location>
</feature>
<feature type="compositionally biased region" description="Basic and acidic residues" evidence="2">
    <location>
        <begin position="800"/>
        <end position="814"/>
    </location>
</feature>
<feature type="glycosylation site" description="N-linked (GlcNAc...) asparagine" evidence="1">
    <location>
        <position position="68"/>
    </location>
</feature>
<feature type="glycosylation site" description="N-linked (GlcNAc...) asparagine" evidence="1">
    <location>
        <position position="205"/>
    </location>
</feature>
<feature type="glycosylation site" description="N-linked (GlcNAc...) asparagine" evidence="1">
    <location>
        <position position="225"/>
    </location>
</feature>
<protein>
    <recommendedName>
        <fullName>Protein FAM171A2</fullName>
    </recommendedName>
</protein>
<name>F1712_XENLA</name>
<evidence type="ECO:0000255" key="1"/>
<evidence type="ECO:0000256" key="2">
    <source>
        <dbReference type="SAM" id="MobiDB-lite"/>
    </source>
</evidence>
<evidence type="ECO:0000305" key="3"/>
<proteinExistence type="evidence at transcript level"/>
<reference key="1">
    <citation type="submission" date="2006-12" db="EMBL/GenBank/DDBJ databases">
        <authorList>
            <consortium name="NIH - Xenopus Gene Collection (XGC) project"/>
        </authorList>
    </citation>
    <scope>NUCLEOTIDE SEQUENCE [LARGE SCALE MRNA]</scope>
    <source>
        <tissue>Embryo</tissue>
    </source>
</reference>
<comment type="subcellular location">
    <subcellularLocation>
        <location evidence="3">Membrane</location>
        <topology evidence="3">Single-pass type I membrane protein</topology>
    </subcellularLocation>
</comment>
<comment type="similarity">
    <text evidence="3">Belongs to the FAM171 family.</text>
</comment>